<gene>
    <name evidence="1" type="primary">rbfA</name>
    <name type="ordered locus">Swit_3815</name>
</gene>
<reference key="1">
    <citation type="journal article" date="2010" name="J. Bacteriol.">
        <title>Genome sequence of the dioxin-mineralizing bacterium Sphingomonas wittichii RW1.</title>
        <authorList>
            <person name="Miller T.R."/>
            <person name="Delcher A.L."/>
            <person name="Salzberg S.L."/>
            <person name="Saunders E."/>
            <person name="Detter J.C."/>
            <person name="Halden R.U."/>
        </authorList>
    </citation>
    <scope>NUCLEOTIDE SEQUENCE [LARGE SCALE GENOMIC DNA]</scope>
    <source>
        <strain>DSM 6014 / CCUG 31198 / JCM 15750 / NBRC 105917 / EY 4224 / RW1</strain>
    </source>
</reference>
<protein>
    <recommendedName>
        <fullName evidence="1">Ribosome-binding factor A</fullName>
    </recommendedName>
</protein>
<keyword id="KW-0963">Cytoplasm</keyword>
<keyword id="KW-1185">Reference proteome</keyword>
<keyword id="KW-0690">Ribosome biogenesis</keyword>
<comment type="function">
    <text evidence="1">One of several proteins that assist in the late maturation steps of the functional core of the 30S ribosomal subunit. Associates with free 30S ribosomal subunits (but not with 30S subunits that are part of 70S ribosomes or polysomes). Required for efficient processing of 16S rRNA. May interact with the 5'-terminal helix region of 16S rRNA.</text>
</comment>
<comment type="subunit">
    <text evidence="1">Monomer. Binds 30S ribosomal subunits, but not 50S ribosomal subunits or 70S ribosomes.</text>
</comment>
<comment type="subcellular location">
    <subcellularLocation>
        <location evidence="1">Cytoplasm</location>
    </subcellularLocation>
</comment>
<comment type="similarity">
    <text evidence="1">Belongs to the RbfA family.</text>
</comment>
<name>RBFA_RHIWR</name>
<feature type="chain" id="PRO_1000000218" description="Ribosome-binding factor A">
    <location>
        <begin position="1"/>
        <end position="132"/>
    </location>
</feature>
<proteinExistence type="inferred from homology"/>
<organism>
    <name type="scientific">Rhizorhabdus wittichii (strain DSM 6014 / CCUG 31198 / JCM 15750 / NBRC 105917 / EY 4224 / RW1)</name>
    <name type="common">Sphingomonas wittichii</name>
    <dbReference type="NCBI Taxonomy" id="392499"/>
    <lineage>
        <taxon>Bacteria</taxon>
        <taxon>Pseudomonadati</taxon>
        <taxon>Pseudomonadota</taxon>
        <taxon>Alphaproteobacteria</taxon>
        <taxon>Sphingomonadales</taxon>
        <taxon>Sphingomonadaceae</taxon>
        <taxon>Rhizorhabdus</taxon>
    </lineage>
</organism>
<sequence>MRRNETPEGRSVRLLRVGEQVRHALSDILMRGEVHDDVLASHMVSVTEVRMSPDLRHATVFVKPLLGGDEDIVIKALRTNTAFLQSEVARRVNTKYAAKLKFLADESFDEGSHIDRLLRDPSIARDLDQDAD</sequence>
<evidence type="ECO:0000255" key="1">
    <source>
        <dbReference type="HAMAP-Rule" id="MF_00003"/>
    </source>
</evidence>
<dbReference type="EMBL" id="CP000699">
    <property type="protein sequence ID" value="ABQ70160.1"/>
    <property type="molecule type" value="Genomic_DNA"/>
</dbReference>
<dbReference type="SMR" id="A5VCZ4"/>
<dbReference type="STRING" id="392499.Swit_3815"/>
<dbReference type="PaxDb" id="392499-Swit_3815"/>
<dbReference type="KEGG" id="swi:Swit_3815"/>
<dbReference type="eggNOG" id="COG0858">
    <property type="taxonomic scope" value="Bacteria"/>
</dbReference>
<dbReference type="HOGENOM" id="CLU_089475_1_0_5"/>
<dbReference type="OrthoDB" id="9805051at2"/>
<dbReference type="Proteomes" id="UP000001989">
    <property type="component" value="Chromosome"/>
</dbReference>
<dbReference type="GO" id="GO:0005829">
    <property type="term" value="C:cytosol"/>
    <property type="evidence" value="ECO:0007669"/>
    <property type="project" value="TreeGrafter"/>
</dbReference>
<dbReference type="GO" id="GO:0043024">
    <property type="term" value="F:ribosomal small subunit binding"/>
    <property type="evidence" value="ECO:0007669"/>
    <property type="project" value="TreeGrafter"/>
</dbReference>
<dbReference type="GO" id="GO:0030490">
    <property type="term" value="P:maturation of SSU-rRNA"/>
    <property type="evidence" value="ECO:0007669"/>
    <property type="project" value="UniProtKB-UniRule"/>
</dbReference>
<dbReference type="Gene3D" id="3.30.300.20">
    <property type="match status" value="1"/>
</dbReference>
<dbReference type="HAMAP" id="MF_00003">
    <property type="entry name" value="RbfA"/>
    <property type="match status" value="1"/>
</dbReference>
<dbReference type="InterPro" id="IPR015946">
    <property type="entry name" value="KH_dom-like_a/b"/>
</dbReference>
<dbReference type="InterPro" id="IPR000238">
    <property type="entry name" value="RbfA"/>
</dbReference>
<dbReference type="InterPro" id="IPR023799">
    <property type="entry name" value="RbfA_dom_sf"/>
</dbReference>
<dbReference type="NCBIfam" id="NF001802">
    <property type="entry name" value="PRK00521.2-5"/>
    <property type="match status" value="1"/>
</dbReference>
<dbReference type="NCBIfam" id="TIGR00082">
    <property type="entry name" value="rbfA"/>
    <property type="match status" value="1"/>
</dbReference>
<dbReference type="PANTHER" id="PTHR33515">
    <property type="entry name" value="RIBOSOME-BINDING FACTOR A, CHLOROPLASTIC-RELATED"/>
    <property type="match status" value="1"/>
</dbReference>
<dbReference type="PANTHER" id="PTHR33515:SF1">
    <property type="entry name" value="RIBOSOME-BINDING FACTOR A, CHLOROPLASTIC-RELATED"/>
    <property type="match status" value="1"/>
</dbReference>
<dbReference type="Pfam" id="PF02033">
    <property type="entry name" value="RBFA"/>
    <property type="match status" value="1"/>
</dbReference>
<dbReference type="SUPFAM" id="SSF89919">
    <property type="entry name" value="Ribosome-binding factor A, RbfA"/>
    <property type="match status" value="1"/>
</dbReference>
<accession>A5VCZ4</accession>